<organism>
    <name type="scientific">Aeromonas hydrophila</name>
    <dbReference type="NCBI Taxonomy" id="644"/>
    <lineage>
        <taxon>Bacteria</taxon>
        <taxon>Pseudomonadati</taxon>
        <taxon>Pseudomonadota</taxon>
        <taxon>Gammaproteobacteria</taxon>
        <taxon>Aeromonadales</taxon>
        <taxon>Aeromonadaceae</taxon>
        <taxon>Aeromonas</taxon>
    </lineage>
</organism>
<dbReference type="EC" id="3.1.1.3" evidence="4"/>
<dbReference type="EMBL" id="S65123">
    <property type="protein sequence ID" value="AAB28083.2"/>
    <property type="molecule type" value="Genomic_DNA"/>
</dbReference>
<dbReference type="ESTHER" id="aerhy-lipe">
    <property type="family name" value="Lipase_bact_N_lipase"/>
</dbReference>
<dbReference type="GO" id="GO:0005576">
    <property type="term" value="C:extracellular region"/>
    <property type="evidence" value="ECO:0007669"/>
    <property type="project" value="UniProtKB-SubCell"/>
</dbReference>
<dbReference type="GO" id="GO:0004806">
    <property type="term" value="F:triacylglycerol lipase activity"/>
    <property type="evidence" value="ECO:0007669"/>
    <property type="project" value="UniProtKB-EC"/>
</dbReference>
<dbReference type="GO" id="GO:0016042">
    <property type="term" value="P:lipid catabolic process"/>
    <property type="evidence" value="ECO:0007669"/>
    <property type="project" value="UniProtKB-KW"/>
</dbReference>
<dbReference type="InterPro" id="IPR025920">
    <property type="entry name" value="Lipase_bact_N"/>
</dbReference>
<dbReference type="Pfam" id="PF12262">
    <property type="entry name" value="Lipase_bact_N"/>
    <property type="match status" value="1"/>
</dbReference>
<dbReference type="PROSITE" id="PS00120">
    <property type="entry name" value="LIPASE_SER"/>
    <property type="match status" value="1"/>
</dbReference>
<gene>
    <name evidence="5" type="primary">lip</name>
</gene>
<comment type="function">
    <text evidence="4">The optimum chain lengths for the acyl moiety is C6 for ester hydrolysis and C6 and C8 for triacylglycerol hydrolysis.</text>
</comment>
<comment type="catalytic activity">
    <reaction evidence="4">
        <text>a triacylglycerol + H2O = a diacylglycerol + a fatty acid + H(+)</text>
        <dbReference type="Rhea" id="RHEA:12044"/>
        <dbReference type="ChEBI" id="CHEBI:15377"/>
        <dbReference type="ChEBI" id="CHEBI:15378"/>
        <dbReference type="ChEBI" id="CHEBI:17855"/>
        <dbReference type="ChEBI" id="CHEBI:18035"/>
        <dbReference type="ChEBI" id="CHEBI:28868"/>
        <dbReference type="EC" id="3.1.1.3"/>
    </reaction>
</comment>
<comment type="biophysicochemical properties">
    <phDependence>
        <text evidence="4">Optimum pH is 7.2.</text>
    </phDependence>
    <temperatureDependence>
        <text evidence="4">Optimum temperature is 37 degrees Celsius. Retains 90% of its activity after 30 minutes at 55 degrees Celsius.</text>
    </temperatureDependence>
</comment>
<comment type="subunit">
    <text evidence="4">Monomer.</text>
</comment>
<comment type="subcellular location">
    <subcellularLocation>
        <location evidence="4">Secreted</location>
    </subcellularLocation>
</comment>
<comment type="similarity">
    <text evidence="6">Belongs to the AB hydrolase superfamily. Lipase family.</text>
</comment>
<proteinExistence type="evidence at protein level"/>
<feature type="signal peptide" evidence="1">
    <location>
        <begin position="1"/>
        <end position="48"/>
    </location>
</feature>
<feature type="chain" id="PRO_0000017729" description="Extracellular lipase">
    <location>
        <begin position="49"/>
        <end position="684"/>
    </location>
</feature>
<feature type="region of interest" description="Disordered" evidence="3">
    <location>
        <begin position="321"/>
        <end position="405"/>
    </location>
</feature>
<feature type="region of interest" description="Disordered" evidence="3">
    <location>
        <begin position="462"/>
        <end position="493"/>
    </location>
</feature>
<feature type="compositionally biased region" description="Basic and acidic residues" evidence="3">
    <location>
        <begin position="385"/>
        <end position="405"/>
    </location>
</feature>
<feature type="active site" description="Nucleophile" evidence="2">
    <location>
        <position position="568"/>
    </location>
</feature>
<sequence length="684" mass="71904">MKKKLIYAAVVSALLAGCGGSDDNKGDTSSYLDYLLTGSNAVGPSALAARAWDGTLKFSTETADLSNPVSAMSTLDGWSTTQAIQIVPVTSSGITVQAPTTAEFGASVAPLYLLEVTFDSTALRPSGVKKVLTYGVDFVVAASAWQAEPGSAQAVEPLPCLANDSGHRTAERQSRRCLKAGSDYGNYKNNAGSNAQEQTINGLIALQEGLFKAATGIATDHVIFSDWFGTQSGADVLVAVKGAAASVLKADPVTLDAAKLWKQDAWEHQPARHLYPGRDRPTCLPDPAGCRAVPAAEQKDAIATAFGPVLRSTRLLKRPRSIPVPSSCLTSSPHRRPQVPGARPRPSPGTVPSQPVRHRQCAEGVTRSDRRAGGGGRGSGPAGDADCRSDPPERAAGRGEQADWGDAHLRRQAAGRRAEHWSLQPAADAGRGAIRADACLRQGCPQHHHGCHHLSARRDLGQRERLRPGAGPDLEDLCRHAGGQEGGAGGDRSSAARRAWLRLSGSMDTVTTSDNPTPYLNLSYLTVARDNLKQSVAICWACVWRLAWPTPRAIGTAGSLKVHFLGHSLGASRVPTCCGRQPDHRQRASGCPVQVRYRWPGHAGSHSAAAAELADFGPTIKMGVLTSGSAELKAGFTAYAPNCTDGGAYLLRQRVPAEPGRGHSATAATRCRVQLCGPVGAGFG</sequence>
<keyword id="KW-0378">Hydrolase</keyword>
<keyword id="KW-0442">Lipid degradation</keyword>
<keyword id="KW-0443">Lipid metabolism</keyword>
<keyword id="KW-0964">Secreted</keyword>
<keyword id="KW-0732">Signal</keyword>
<reference key="1">
    <citation type="journal article" date="1993" name="Appl. Environ. Microbiol.">
        <title>Purification, gene cloning, amino acid sequence analysis, and expression of an extracellular lipase from an Aeromonas hydrophila human isolate.</title>
        <authorList>
            <person name="Anguita J."/>
            <person name="Rodriguez Aparicio L.B."/>
            <person name="Naharro G."/>
        </authorList>
    </citation>
    <scope>NUCLEOTIDE SEQUENCE [GENOMIC DNA]</scope>
    <scope>FUNCTION</scope>
    <scope>CATALYTIC ACTIVITY</scope>
    <scope>BIOPHYSICOCHEMICAL PROPERTIES</scope>
    <scope>SUBUNIT</scope>
    <scope>SUBCELLULAR LOCATION</scope>
    <source>
        <strain>H3</strain>
    </source>
</reference>
<accession>P40600</accession>
<name>LIPE_AERHY</name>
<protein>
    <recommendedName>
        <fullName evidence="5">Extracellular lipase</fullName>
        <ecNumber evidence="4">3.1.1.3</ecNumber>
    </recommendedName>
    <alternativeName>
        <fullName evidence="6">Triacylglycerol lipase</fullName>
    </alternativeName>
</protein>
<evidence type="ECO:0000255" key="1"/>
<evidence type="ECO:0000255" key="2">
    <source>
        <dbReference type="PROSITE-ProRule" id="PRU10037"/>
    </source>
</evidence>
<evidence type="ECO:0000256" key="3">
    <source>
        <dbReference type="SAM" id="MobiDB-lite"/>
    </source>
</evidence>
<evidence type="ECO:0000269" key="4">
    <source>
    </source>
</evidence>
<evidence type="ECO:0000303" key="5">
    <source>
    </source>
</evidence>
<evidence type="ECO:0000305" key="6"/>